<comment type="function">
    <text evidence="1">Prevents the cell division inhibition by proteins MinC and MinD at internal division sites while permitting inhibition at polar sites. This ensures cell division at the proper site by restricting the formation of a division septum at the midpoint of the long axis of the cell.</text>
</comment>
<comment type="similarity">
    <text evidence="1">Belongs to the MinE family.</text>
</comment>
<name>MINE_NEIMF</name>
<sequence>MSLIEFLFGRKQKTATVARDRLQIIIAQERAQEGQAPDYLPTLRKELMEVLSKYVNVSLDNIRISQEKQDGMDVLELNITLPEQKKV</sequence>
<proteinExistence type="inferred from homology"/>
<feature type="chain" id="PRO_0000298138" description="Cell division topological specificity factor">
    <location>
        <begin position="1"/>
        <end position="87"/>
    </location>
</feature>
<evidence type="ECO:0000255" key="1">
    <source>
        <dbReference type="HAMAP-Rule" id="MF_00262"/>
    </source>
</evidence>
<gene>
    <name evidence="1" type="primary">minE</name>
    <name type="ordered locus">NMC0162</name>
</gene>
<organism>
    <name type="scientific">Neisseria meningitidis serogroup C / serotype 2a (strain ATCC 700532 / DSM 15464 / FAM18)</name>
    <dbReference type="NCBI Taxonomy" id="272831"/>
    <lineage>
        <taxon>Bacteria</taxon>
        <taxon>Pseudomonadati</taxon>
        <taxon>Pseudomonadota</taxon>
        <taxon>Betaproteobacteria</taxon>
        <taxon>Neisseriales</taxon>
        <taxon>Neisseriaceae</taxon>
        <taxon>Neisseria</taxon>
    </lineage>
</organism>
<dbReference type="EMBL" id="AM421808">
    <property type="protein sequence ID" value="CAM09481.1"/>
    <property type="molecule type" value="Genomic_DNA"/>
</dbReference>
<dbReference type="RefSeq" id="WP_002215465.1">
    <property type="nucleotide sequence ID" value="NC_008767.1"/>
</dbReference>
<dbReference type="SMR" id="A1KRK3"/>
<dbReference type="GeneID" id="93387247"/>
<dbReference type="KEGG" id="nmc:NMC0162"/>
<dbReference type="HOGENOM" id="CLU_137929_2_1_4"/>
<dbReference type="Proteomes" id="UP000002286">
    <property type="component" value="Chromosome"/>
</dbReference>
<dbReference type="GO" id="GO:0051301">
    <property type="term" value="P:cell division"/>
    <property type="evidence" value="ECO:0007669"/>
    <property type="project" value="UniProtKB-KW"/>
</dbReference>
<dbReference type="GO" id="GO:0032955">
    <property type="term" value="P:regulation of division septum assembly"/>
    <property type="evidence" value="ECO:0007669"/>
    <property type="project" value="InterPro"/>
</dbReference>
<dbReference type="FunFam" id="3.30.1070.10:FF:000001">
    <property type="entry name" value="Cell division topological specificity factor"/>
    <property type="match status" value="1"/>
</dbReference>
<dbReference type="Gene3D" id="3.30.1070.10">
    <property type="entry name" value="Cell division topological specificity factor MinE"/>
    <property type="match status" value="1"/>
</dbReference>
<dbReference type="HAMAP" id="MF_00262">
    <property type="entry name" value="MinE"/>
    <property type="match status" value="1"/>
</dbReference>
<dbReference type="InterPro" id="IPR005527">
    <property type="entry name" value="MinE"/>
</dbReference>
<dbReference type="InterPro" id="IPR036707">
    <property type="entry name" value="MinE_sf"/>
</dbReference>
<dbReference type="NCBIfam" id="TIGR01215">
    <property type="entry name" value="minE"/>
    <property type="match status" value="1"/>
</dbReference>
<dbReference type="NCBIfam" id="NF001422">
    <property type="entry name" value="PRK00296.1"/>
    <property type="match status" value="1"/>
</dbReference>
<dbReference type="NCBIfam" id="NF010595">
    <property type="entry name" value="PRK13989.1"/>
    <property type="match status" value="1"/>
</dbReference>
<dbReference type="Pfam" id="PF03776">
    <property type="entry name" value="MinE"/>
    <property type="match status" value="1"/>
</dbReference>
<dbReference type="SUPFAM" id="SSF55229">
    <property type="entry name" value="Cell division protein MinE topological specificity domain"/>
    <property type="match status" value="1"/>
</dbReference>
<protein>
    <recommendedName>
        <fullName evidence="1">Cell division topological specificity factor</fullName>
    </recommendedName>
</protein>
<reference key="1">
    <citation type="journal article" date="2007" name="PLoS Genet.">
        <title>Meningococcal genetic variation mechanisms viewed through comparative analysis of serogroup C strain FAM18.</title>
        <authorList>
            <person name="Bentley S.D."/>
            <person name="Vernikos G.S."/>
            <person name="Snyder L.A.S."/>
            <person name="Churcher C."/>
            <person name="Arrowsmith C."/>
            <person name="Chillingworth T."/>
            <person name="Cronin A."/>
            <person name="Davis P.H."/>
            <person name="Holroyd N.E."/>
            <person name="Jagels K."/>
            <person name="Maddison M."/>
            <person name="Moule S."/>
            <person name="Rabbinowitsch E."/>
            <person name="Sharp S."/>
            <person name="Unwin L."/>
            <person name="Whitehead S."/>
            <person name="Quail M.A."/>
            <person name="Achtman M."/>
            <person name="Barrell B.G."/>
            <person name="Saunders N.J."/>
            <person name="Parkhill J."/>
        </authorList>
    </citation>
    <scope>NUCLEOTIDE SEQUENCE [LARGE SCALE GENOMIC DNA]</scope>
    <source>
        <strain>ATCC 700532 / DSM 15464 / FAM18</strain>
    </source>
</reference>
<keyword id="KW-0131">Cell cycle</keyword>
<keyword id="KW-0132">Cell division</keyword>
<accession>A1KRK3</accession>